<proteinExistence type="evidence at transcript level"/>
<sequence length="265" mass="30374">MKAVLLTLAVLFLTGSQARHFWQQDDPQSSWDRVKDFATVYVDAIKDSGRDYVAQFEASALGKQLNLKLLDNWDSLTSTFAKVREQLGPVTQEFWDNLEKETESLRQEMNKDLEEVKQKVQPYLDEFQKKWQEELQIYRQKVAPLGEELREGARQKVQELQDKLTPLAEEMRDRARSHVETLRQQLAPYSDDLRQRMAARFEMLKAGGGSLAEYHAKASEQLRALGEKAKPALEDLRQGLVPVLESLKVSILAAIDEASKKLNAQ</sequence>
<name>APOA1_TURTR</name>
<protein>
    <recommendedName>
        <fullName>Apolipoprotein A-I</fullName>
        <shortName>Apo-AI</shortName>
        <shortName>ApoA-I</shortName>
    </recommendedName>
    <alternativeName>
        <fullName>Apolipoprotein A1</fullName>
    </alternativeName>
    <component>
        <recommendedName>
            <fullName>Proapolipoprotein A-I</fullName>
            <shortName>ProapoA-I</shortName>
        </recommendedName>
    </component>
    <component>
        <recommendedName>
            <fullName>Truncated apolipoprotein A-I</fullName>
        </recommendedName>
    </component>
</protein>
<organism>
    <name type="scientific">Tursiops truncatus</name>
    <name type="common">Atlantic bottle-nosed dolphin</name>
    <name type="synonym">Delphinus truncatus</name>
    <dbReference type="NCBI Taxonomy" id="9739"/>
    <lineage>
        <taxon>Eukaryota</taxon>
        <taxon>Metazoa</taxon>
        <taxon>Chordata</taxon>
        <taxon>Craniata</taxon>
        <taxon>Vertebrata</taxon>
        <taxon>Euteleostomi</taxon>
        <taxon>Mammalia</taxon>
        <taxon>Eutheria</taxon>
        <taxon>Laurasiatheria</taxon>
        <taxon>Artiodactyla</taxon>
        <taxon>Whippomorpha</taxon>
        <taxon>Cetacea</taxon>
        <taxon>Odontoceti</taxon>
        <taxon>Delphinidae</taxon>
        <taxon>Tursiops</taxon>
    </lineage>
</organism>
<accession>P0DMB0</accession>
<evidence type="ECO:0000250" key="1"/>
<evidence type="ECO:0000250" key="2">
    <source>
        <dbReference type="UniProtKB" id="G5BQH5"/>
    </source>
</evidence>
<evidence type="ECO:0000250" key="3">
    <source>
        <dbReference type="UniProtKB" id="P02647"/>
    </source>
</evidence>
<evidence type="ECO:0000250" key="4">
    <source>
        <dbReference type="UniProtKB" id="P04639"/>
    </source>
</evidence>
<evidence type="ECO:0000305" key="5"/>
<comment type="function">
    <text evidence="1">Participates in the reverse transport of cholesterol from tissues to the liver for excretion by promoting cholesterol efflux from tissues and by acting as a cofactor for the lecithin cholesterol acyltransferase (LCAT). As part of the SPAP complex, activates spermatozoa motility (By similarity).</text>
</comment>
<comment type="subunit">
    <text evidence="2 3 4">Homodimer (By similarity). Interacts with APOA1BP and CLU. Component of a sperm activating protein complex (SPAP), consisting of APOA1, an immunoglobulin heavy chain, an immunoglobulin light chain and albumin. Interacts with NDRG1. Interacts with SCGB3A2 (By similarity). Interacts with NAXE and YJEFN3 (By similarity).</text>
</comment>
<comment type="subcellular location">
    <subcellularLocation>
        <location>Secreted</location>
    </subcellularLocation>
</comment>
<comment type="tissue specificity">
    <text>Major protein of plasma HDL, also found in chylomicrons.</text>
</comment>
<comment type="PTM">
    <text evidence="1">Glycosylated.</text>
</comment>
<comment type="PTM">
    <text evidence="1">Palmitoylated.</text>
</comment>
<comment type="PTM">
    <text evidence="1">Phosphorylation sites are present in the extracellular medium.</text>
</comment>
<comment type="similarity">
    <text evidence="5">Belongs to the apolipoprotein A1/A4/E family.</text>
</comment>
<reference key="1">
    <citation type="unpublished observations" date="2013-11">
        <authorList>
            <person name="Puppione D.L."/>
        </authorList>
    </citation>
    <scope>IDENTIFICATION</scope>
</reference>
<feature type="signal peptide" evidence="1">
    <location>
        <begin position="1"/>
        <end position="18"/>
    </location>
</feature>
<feature type="chain" id="PRO_0000425339" description="Proapolipoprotein A-I">
    <location>
        <begin position="19"/>
        <end position="265"/>
    </location>
</feature>
<feature type="chain" id="PRO_0000425101" description="Apolipoprotein A-I">
    <location>
        <begin position="25"/>
        <end position="265"/>
    </location>
</feature>
<feature type="chain" id="PRO_0000425102" description="Truncated apolipoprotein A-I">
    <location>
        <begin position="25"/>
        <end position="264"/>
    </location>
</feature>
<feature type="repeat" description="1">
    <location>
        <begin position="67"/>
        <end position="88"/>
    </location>
</feature>
<feature type="repeat" description="2">
    <location>
        <begin position="89"/>
        <end position="110"/>
    </location>
</feature>
<feature type="repeat" description="3; half-length">
    <location>
        <begin position="111"/>
        <end position="121"/>
    </location>
</feature>
<feature type="repeat" description="4">
    <location>
        <begin position="122"/>
        <end position="142"/>
    </location>
</feature>
<feature type="repeat" description="5">
    <location>
        <begin position="144"/>
        <end position="165"/>
    </location>
</feature>
<feature type="repeat" description="6">
    <location>
        <begin position="166"/>
        <end position="187"/>
    </location>
</feature>
<feature type="repeat" description="7">
    <location>
        <begin position="188"/>
        <end position="209"/>
    </location>
</feature>
<feature type="repeat" description="8">
    <location>
        <begin position="210"/>
        <end position="230"/>
    </location>
</feature>
<feature type="repeat" description="9; half-length">
    <location>
        <begin position="231"/>
        <end position="241"/>
    </location>
</feature>
<feature type="repeat" description="10">
    <location>
        <begin position="242"/>
        <end position="265"/>
    </location>
</feature>
<feature type="region of interest" description="10 X approximate tandem repeats" evidence="1">
    <location>
        <begin position="67"/>
        <end position="265"/>
    </location>
</feature>
<feature type="modified residue" description="Methionine sulfoxide" evidence="1">
    <location>
        <position position="109"/>
    </location>
</feature>
<keyword id="KW-0153">Cholesterol metabolism</keyword>
<keyword id="KW-0325">Glycoprotein</keyword>
<keyword id="KW-0345">HDL</keyword>
<keyword id="KW-0443">Lipid metabolism</keyword>
<keyword id="KW-0445">Lipid transport</keyword>
<keyword id="KW-0449">Lipoprotein</keyword>
<keyword id="KW-0558">Oxidation</keyword>
<keyword id="KW-0564">Palmitate</keyword>
<keyword id="KW-0597">Phosphoprotein</keyword>
<keyword id="KW-1185">Reference proteome</keyword>
<keyword id="KW-0677">Repeat</keyword>
<keyword id="KW-0964">Secreted</keyword>
<keyword id="KW-0732">Signal</keyword>
<keyword id="KW-0753">Steroid metabolism</keyword>
<keyword id="KW-1207">Sterol metabolism</keyword>
<keyword id="KW-0813">Transport</keyword>
<gene>
    <name type="primary">APOA1</name>
</gene>
<dbReference type="RefSeq" id="XP_019797580.1">
    <property type="nucleotide sequence ID" value="XM_019942021.2"/>
</dbReference>
<dbReference type="SMR" id="P0DMB0"/>
<dbReference type="FunCoup" id="P0DMB0">
    <property type="interactions" value="123"/>
</dbReference>
<dbReference type="STRING" id="9739.ENSTTRP00000010994"/>
<dbReference type="GeneID" id="101324813"/>
<dbReference type="CTD" id="335"/>
<dbReference type="InParanoid" id="P0DMB0"/>
<dbReference type="OrthoDB" id="8727817at2759"/>
<dbReference type="Proteomes" id="UP000245320">
    <property type="component" value="Chromosome 8"/>
</dbReference>
<dbReference type="GO" id="GO:0042627">
    <property type="term" value="C:chylomicron"/>
    <property type="evidence" value="ECO:0007669"/>
    <property type="project" value="TreeGrafter"/>
</dbReference>
<dbReference type="GO" id="GO:1903561">
    <property type="term" value="C:extracellular vesicle"/>
    <property type="evidence" value="ECO:0007669"/>
    <property type="project" value="TreeGrafter"/>
</dbReference>
<dbReference type="GO" id="GO:0034364">
    <property type="term" value="C:high-density lipoprotein particle"/>
    <property type="evidence" value="ECO:0007669"/>
    <property type="project" value="UniProtKB-KW"/>
</dbReference>
<dbReference type="GO" id="GO:0034362">
    <property type="term" value="C:low-density lipoprotein particle"/>
    <property type="evidence" value="ECO:0007669"/>
    <property type="project" value="TreeGrafter"/>
</dbReference>
<dbReference type="GO" id="GO:0034361">
    <property type="term" value="C:very-low-density lipoprotein particle"/>
    <property type="evidence" value="ECO:0007669"/>
    <property type="project" value="TreeGrafter"/>
</dbReference>
<dbReference type="GO" id="GO:0120020">
    <property type="term" value="F:cholesterol transfer activity"/>
    <property type="evidence" value="ECO:0007669"/>
    <property type="project" value="TreeGrafter"/>
</dbReference>
<dbReference type="GO" id="GO:0060228">
    <property type="term" value="F:phosphatidylcholine-sterol O-acyltransferase activator activity"/>
    <property type="evidence" value="ECO:0007669"/>
    <property type="project" value="TreeGrafter"/>
</dbReference>
<dbReference type="GO" id="GO:0005543">
    <property type="term" value="F:phospholipid binding"/>
    <property type="evidence" value="ECO:0007669"/>
    <property type="project" value="TreeGrafter"/>
</dbReference>
<dbReference type="GO" id="GO:0042803">
    <property type="term" value="F:protein homodimerization activity"/>
    <property type="evidence" value="ECO:0000250"/>
    <property type="project" value="UniProtKB"/>
</dbReference>
<dbReference type="GO" id="GO:0055090">
    <property type="term" value="P:acylglycerol homeostasis"/>
    <property type="evidence" value="ECO:0007669"/>
    <property type="project" value="TreeGrafter"/>
</dbReference>
<dbReference type="GO" id="GO:0033344">
    <property type="term" value="P:cholesterol efflux"/>
    <property type="evidence" value="ECO:0007669"/>
    <property type="project" value="TreeGrafter"/>
</dbReference>
<dbReference type="GO" id="GO:0008203">
    <property type="term" value="P:cholesterol metabolic process"/>
    <property type="evidence" value="ECO:0007669"/>
    <property type="project" value="UniProtKB-KW"/>
</dbReference>
<dbReference type="GO" id="GO:0042157">
    <property type="term" value="P:lipoprotein metabolic process"/>
    <property type="evidence" value="ECO:0007669"/>
    <property type="project" value="InterPro"/>
</dbReference>
<dbReference type="GO" id="GO:0033700">
    <property type="term" value="P:phospholipid efflux"/>
    <property type="evidence" value="ECO:0007669"/>
    <property type="project" value="TreeGrafter"/>
</dbReference>
<dbReference type="GO" id="GO:0010875">
    <property type="term" value="P:positive regulation of cholesterol efflux"/>
    <property type="evidence" value="ECO:0000250"/>
    <property type="project" value="UniProtKB"/>
</dbReference>
<dbReference type="GO" id="GO:0050766">
    <property type="term" value="P:positive regulation of phagocytosis"/>
    <property type="evidence" value="ECO:0000250"/>
    <property type="project" value="UniProtKB"/>
</dbReference>
<dbReference type="GO" id="GO:1902995">
    <property type="term" value="P:positive regulation of phospholipid efflux"/>
    <property type="evidence" value="ECO:0000250"/>
    <property type="project" value="UniProtKB"/>
</dbReference>
<dbReference type="GO" id="GO:0050821">
    <property type="term" value="P:protein stabilization"/>
    <property type="evidence" value="ECO:0000250"/>
    <property type="project" value="UniProtKB"/>
</dbReference>
<dbReference type="FunFam" id="1.20.120.20:FF:000001">
    <property type="entry name" value="Apolipoprotein A-I"/>
    <property type="match status" value="1"/>
</dbReference>
<dbReference type="FunFam" id="1.20.5.20:FF:000001">
    <property type="entry name" value="apolipoprotein A-I"/>
    <property type="match status" value="1"/>
</dbReference>
<dbReference type="Gene3D" id="1.20.5.20">
    <property type="match status" value="1"/>
</dbReference>
<dbReference type="Gene3D" id="6.10.140.380">
    <property type="match status" value="1"/>
</dbReference>
<dbReference type="Gene3D" id="1.20.120.20">
    <property type="entry name" value="Apolipoprotein"/>
    <property type="match status" value="1"/>
</dbReference>
<dbReference type="InterPro" id="IPR000074">
    <property type="entry name" value="ApoA_E"/>
</dbReference>
<dbReference type="InterPro" id="IPR050163">
    <property type="entry name" value="Apolipoprotein_A1/A4/E"/>
</dbReference>
<dbReference type="PANTHER" id="PTHR18976">
    <property type="entry name" value="APOLIPOPROTEIN"/>
    <property type="match status" value="1"/>
</dbReference>
<dbReference type="PANTHER" id="PTHR18976:SF11">
    <property type="entry name" value="APOLIPOPROTEIN A-I"/>
    <property type="match status" value="1"/>
</dbReference>
<dbReference type="Pfam" id="PF01442">
    <property type="entry name" value="Apolipoprotein"/>
    <property type="match status" value="1"/>
</dbReference>
<dbReference type="SUPFAM" id="SSF58113">
    <property type="entry name" value="Apolipoprotein A-I"/>
    <property type="match status" value="1"/>
</dbReference>